<proteinExistence type="inferred from homology"/>
<accession>Q9I617</accession>
<reference key="1">
    <citation type="journal article" date="2000" name="Nature">
        <title>Complete genome sequence of Pseudomonas aeruginosa PAO1, an opportunistic pathogen.</title>
        <authorList>
            <person name="Stover C.K."/>
            <person name="Pham X.-Q.T."/>
            <person name="Erwin A.L."/>
            <person name="Mizoguchi S.D."/>
            <person name="Warrener P."/>
            <person name="Hickey M.J."/>
            <person name="Brinkman F.S.L."/>
            <person name="Hufnagle W.O."/>
            <person name="Kowalik D.J."/>
            <person name="Lagrou M."/>
            <person name="Garber R.L."/>
            <person name="Goltry L."/>
            <person name="Tolentino E."/>
            <person name="Westbrock-Wadman S."/>
            <person name="Yuan Y."/>
            <person name="Brody L.L."/>
            <person name="Coulter S.N."/>
            <person name="Folger K.R."/>
            <person name="Kas A."/>
            <person name="Larbig K."/>
            <person name="Lim R.M."/>
            <person name="Smith K.A."/>
            <person name="Spencer D.H."/>
            <person name="Wong G.K.-S."/>
            <person name="Wu Z."/>
            <person name="Paulsen I.T."/>
            <person name="Reizer J."/>
            <person name="Saier M.H. Jr."/>
            <person name="Hancock R.E.W."/>
            <person name="Lory S."/>
            <person name="Olson M.V."/>
        </authorList>
    </citation>
    <scope>NUCLEOTIDE SEQUENCE [LARGE SCALE GENOMIC DNA]</scope>
    <source>
        <strain>ATCC 15692 / DSM 22644 / CIP 104116 / JCM 14847 / LMG 12228 / 1C / PRS 101 / PAO1</strain>
    </source>
</reference>
<organism>
    <name type="scientific">Pseudomonas aeruginosa (strain ATCC 15692 / DSM 22644 / CIP 104116 / JCM 14847 / LMG 12228 / 1C / PRS 101 / PAO1)</name>
    <dbReference type="NCBI Taxonomy" id="208964"/>
    <lineage>
        <taxon>Bacteria</taxon>
        <taxon>Pseudomonadati</taxon>
        <taxon>Pseudomonadota</taxon>
        <taxon>Gammaproteobacteria</taxon>
        <taxon>Pseudomonadales</taxon>
        <taxon>Pseudomonadaceae</taxon>
        <taxon>Pseudomonas</taxon>
    </lineage>
</organism>
<comment type="function">
    <text evidence="1">Catalyzes the decarboxylative condensation of pimeloyl-[acyl-carrier protein] and L-alanine to produce 8-amino-7-oxononanoate (AON), [acyl-carrier protein], and carbon dioxide.</text>
</comment>
<comment type="catalytic activity">
    <reaction evidence="1">
        <text>6-carboxyhexanoyl-[ACP] + L-alanine + H(+) = (8S)-8-amino-7-oxononanoate + holo-[ACP] + CO2</text>
        <dbReference type="Rhea" id="RHEA:42288"/>
        <dbReference type="Rhea" id="RHEA-COMP:9685"/>
        <dbReference type="Rhea" id="RHEA-COMP:9955"/>
        <dbReference type="ChEBI" id="CHEBI:15378"/>
        <dbReference type="ChEBI" id="CHEBI:16526"/>
        <dbReference type="ChEBI" id="CHEBI:57972"/>
        <dbReference type="ChEBI" id="CHEBI:64479"/>
        <dbReference type="ChEBI" id="CHEBI:78846"/>
        <dbReference type="ChEBI" id="CHEBI:149468"/>
        <dbReference type="EC" id="2.3.1.47"/>
    </reaction>
</comment>
<comment type="cofactor">
    <cofactor evidence="1">
        <name>pyridoxal 5'-phosphate</name>
        <dbReference type="ChEBI" id="CHEBI:597326"/>
    </cofactor>
</comment>
<comment type="pathway">
    <text evidence="1">Cofactor biosynthesis; biotin biosynthesis.</text>
</comment>
<comment type="subunit">
    <text evidence="1">Homodimer.</text>
</comment>
<comment type="similarity">
    <text evidence="1">Belongs to the class-II pyridoxal-phosphate-dependent aminotransferase family. BioF subfamily.</text>
</comment>
<dbReference type="EC" id="2.3.1.47" evidence="1"/>
<dbReference type="EMBL" id="AE004091">
    <property type="protein sequence ID" value="AAG03890.1"/>
    <property type="molecule type" value="Genomic_DNA"/>
</dbReference>
<dbReference type="PIR" id="G83582">
    <property type="entry name" value="G83582"/>
</dbReference>
<dbReference type="RefSeq" id="NP_249192.1">
    <property type="nucleotide sequence ID" value="NC_002516.2"/>
</dbReference>
<dbReference type="RefSeq" id="WP_003113248.1">
    <property type="nucleotide sequence ID" value="NZ_QZGE01000010.1"/>
</dbReference>
<dbReference type="SMR" id="Q9I617"/>
<dbReference type="FunCoup" id="Q9I617">
    <property type="interactions" value="259"/>
</dbReference>
<dbReference type="STRING" id="208964.PA0501"/>
<dbReference type="PaxDb" id="208964-PA0501"/>
<dbReference type="GeneID" id="879619"/>
<dbReference type="KEGG" id="pae:PA0501"/>
<dbReference type="PATRIC" id="fig|208964.12.peg.529"/>
<dbReference type="PseudoCAP" id="PA0501"/>
<dbReference type="HOGENOM" id="CLU_015846_11_0_6"/>
<dbReference type="InParanoid" id="Q9I617"/>
<dbReference type="OrthoDB" id="9807157at2"/>
<dbReference type="PhylomeDB" id="Q9I617"/>
<dbReference type="BioCyc" id="PAER208964:G1FZ6-506-MONOMER"/>
<dbReference type="UniPathway" id="UPA00078"/>
<dbReference type="Proteomes" id="UP000002438">
    <property type="component" value="Chromosome"/>
</dbReference>
<dbReference type="GO" id="GO:0008710">
    <property type="term" value="F:8-amino-7-oxononanoate synthase activity"/>
    <property type="evidence" value="ECO:0000318"/>
    <property type="project" value="GO_Central"/>
</dbReference>
<dbReference type="GO" id="GO:0030170">
    <property type="term" value="F:pyridoxal phosphate binding"/>
    <property type="evidence" value="ECO:0007669"/>
    <property type="project" value="UniProtKB-UniRule"/>
</dbReference>
<dbReference type="GO" id="GO:0009102">
    <property type="term" value="P:biotin biosynthetic process"/>
    <property type="evidence" value="ECO:0000318"/>
    <property type="project" value="GO_Central"/>
</dbReference>
<dbReference type="CDD" id="cd06454">
    <property type="entry name" value="KBL_like"/>
    <property type="match status" value="1"/>
</dbReference>
<dbReference type="Gene3D" id="3.90.1150.10">
    <property type="entry name" value="Aspartate Aminotransferase, domain 1"/>
    <property type="match status" value="1"/>
</dbReference>
<dbReference type="Gene3D" id="3.40.640.10">
    <property type="entry name" value="Type I PLP-dependent aspartate aminotransferase-like (Major domain)"/>
    <property type="match status" value="1"/>
</dbReference>
<dbReference type="HAMAP" id="MF_01693">
    <property type="entry name" value="BioF_aminotrans_2"/>
    <property type="match status" value="1"/>
</dbReference>
<dbReference type="InterPro" id="IPR001917">
    <property type="entry name" value="Aminotrans_II_pyridoxalP_BS"/>
</dbReference>
<dbReference type="InterPro" id="IPR004839">
    <property type="entry name" value="Aminotransferase_I/II_large"/>
</dbReference>
<dbReference type="InterPro" id="IPR050087">
    <property type="entry name" value="AON_synthase_class-II"/>
</dbReference>
<dbReference type="InterPro" id="IPR004723">
    <property type="entry name" value="AONS_Archaea/Proteobacteria"/>
</dbReference>
<dbReference type="InterPro" id="IPR022834">
    <property type="entry name" value="AONS_Proteobacteria"/>
</dbReference>
<dbReference type="InterPro" id="IPR015424">
    <property type="entry name" value="PyrdxlP-dep_Trfase"/>
</dbReference>
<dbReference type="InterPro" id="IPR015421">
    <property type="entry name" value="PyrdxlP-dep_Trfase_major"/>
</dbReference>
<dbReference type="InterPro" id="IPR015422">
    <property type="entry name" value="PyrdxlP-dep_Trfase_small"/>
</dbReference>
<dbReference type="NCBIfam" id="TIGR00858">
    <property type="entry name" value="bioF"/>
    <property type="match status" value="1"/>
</dbReference>
<dbReference type="PANTHER" id="PTHR13693:SF100">
    <property type="entry name" value="8-AMINO-7-OXONONANOATE SYNTHASE"/>
    <property type="match status" value="1"/>
</dbReference>
<dbReference type="PANTHER" id="PTHR13693">
    <property type="entry name" value="CLASS II AMINOTRANSFERASE/8-AMINO-7-OXONONANOATE SYNTHASE"/>
    <property type="match status" value="1"/>
</dbReference>
<dbReference type="Pfam" id="PF00155">
    <property type="entry name" value="Aminotran_1_2"/>
    <property type="match status" value="1"/>
</dbReference>
<dbReference type="SUPFAM" id="SSF53383">
    <property type="entry name" value="PLP-dependent transferases"/>
    <property type="match status" value="1"/>
</dbReference>
<dbReference type="PROSITE" id="PS00599">
    <property type="entry name" value="AA_TRANSFER_CLASS_2"/>
    <property type="match status" value="1"/>
</dbReference>
<name>BIOF_PSEAE</name>
<protein>
    <recommendedName>
        <fullName evidence="1">8-amino-7-oxononanoate synthase</fullName>
        <shortName evidence="1">AONS</shortName>
        <ecNumber evidence="1">2.3.1.47</ecNumber>
    </recommendedName>
    <alternativeName>
        <fullName evidence="1">7-keto-8-amino-pelargonic acid synthase</fullName>
        <shortName evidence="1">7-KAP synthase</shortName>
        <shortName evidence="1">KAPA synthase</shortName>
    </alternativeName>
    <alternativeName>
        <fullName evidence="1">8-amino-7-ketopelargonate synthase</fullName>
    </alternativeName>
</protein>
<sequence length="401" mass="42237">MSFDLASRLASRRAEDLYRQRPLLESAQGPDVVVDGQPLLAFCSNDYLGLANHPEVIAALRAGAERWGVGGGASHLVVGHSGPHHELELALAEFTGRPRALLFSTGYMANLGAVAALVGKGDTVLEDRLNHASLLDAGLLSGARFSRYLHNDPASLAARLDKAEGNTLVVTDGVFSMDGNLADLPALAAVAQARGAWLMVDDAHGFGPLGASGGGIVEHFGLGQEQVPVLIGTLGKGFGTAGAFVAGSEELIETLIQYARPYIYTTSQPPAVACATLKSLELLRRESWRRQHLAALIARFRHGAEALGLTLMDSFTPIQPILVGGSRQAVALAGMLRARGIMVGAIRPPTVPANSARLRVTLSAAHSEAQVDRLLEALGESWRQLSSSLLAEIEAEEGDDA</sequence>
<gene>
    <name evidence="1" type="primary">bioF</name>
    <name type="ordered locus">PA0501</name>
</gene>
<evidence type="ECO:0000255" key="1">
    <source>
        <dbReference type="HAMAP-Rule" id="MF_01693"/>
    </source>
</evidence>
<feature type="chain" id="PRO_0000287825" description="8-amino-7-oxononanoate synthase">
    <location>
        <begin position="1"/>
        <end position="401"/>
    </location>
</feature>
<feature type="binding site" evidence="1">
    <location>
        <position position="19"/>
    </location>
    <ligand>
        <name>substrate</name>
    </ligand>
</feature>
<feature type="binding site" evidence="1">
    <location>
        <begin position="106"/>
        <end position="107"/>
    </location>
    <ligand>
        <name>pyridoxal 5'-phosphate</name>
        <dbReference type="ChEBI" id="CHEBI:597326"/>
    </ligand>
</feature>
<feature type="binding site" evidence="1">
    <location>
        <position position="131"/>
    </location>
    <ligand>
        <name>substrate</name>
    </ligand>
</feature>
<feature type="binding site" evidence="1">
    <location>
        <position position="176"/>
    </location>
    <ligand>
        <name>pyridoxal 5'-phosphate</name>
        <dbReference type="ChEBI" id="CHEBI:597326"/>
    </ligand>
</feature>
<feature type="binding site" evidence="1">
    <location>
        <position position="204"/>
    </location>
    <ligand>
        <name>pyridoxal 5'-phosphate</name>
        <dbReference type="ChEBI" id="CHEBI:597326"/>
    </ligand>
</feature>
<feature type="binding site" evidence="1">
    <location>
        <position position="233"/>
    </location>
    <ligand>
        <name>pyridoxal 5'-phosphate</name>
        <dbReference type="ChEBI" id="CHEBI:597326"/>
    </ligand>
</feature>
<feature type="binding site" evidence="1">
    <location>
        <position position="350"/>
    </location>
    <ligand>
        <name>substrate</name>
    </ligand>
</feature>
<feature type="modified residue" description="N6-(pyridoxal phosphate)lysine" evidence="1">
    <location>
        <position position="236"/>
    </location>
</feature>
<keyword id="KW-0093">Biotin biosynthesis</keyword>
<keyword id="KW-0663">Pyridoxal phosphate</keyword>
<keyword id="KW-1185">Reference proteome</keyword>
<keyword id="KW-0808">Transferase</keyword>